<reference key="1">
    <citation type="journal article" date="2000" name="Nature">
        <title>DNA sequence of both chromosomes of the cholera pathogen Vibrio cholerae.</title>
        <authorList>
            <person name="Heidelberg J.F."/>
            <person name="Eisen J.A."/>
            <person name="Nelson W.C."/>
            <person name="Clayton R.A."/>
            <person name="Gwinn M.L."/>
            <person name="Dodson R.J."/>
            <person name="Haft D.H."/>
            <person name="Hickey E.K."/>
            <person name="Peterson J.D."/>
            <person name="Umayam L.A."/>
            <person name="Gill S.R."/>
            <person name="Nelson K.E."/>
            <person name="Read T.D."/>
            <person name="Tettelin H."/>
            <person name="Richardson D.L."/>
            <person name="Ermolaeva M.D."/>
            <person name="Vamathevan J.J."/>
            <person name="Bass S."/>
            <person name="Qin H."/>
            <person name="Dragoi I."/>
            <person name="Sellers P."/>
            <person name="McDonald L.A."/>
            <person name="Utterback T.R."/>
            <person name="Fleischmann R.D."/>
            <person name="Nierman W.C."/>
            <person name="White O."/>
            <person name="Salzberg S.L."/>
            <person name="Smith H.O."/>
            <person name="Colwell R.R."/>
            <person name="Mekalanos J.J."/>
            <person name="Venter J.C."/>
            <person name="Fraser C.M."/>
        </authorList>
    </citation>
    <scope>NUCLEOTIDE SEQUENCE [LARGE SCALE GENOMIC DNA]</scope>
    <source>
        <strain>ATCC 39315 / El Tor Inaba N16961</strain>
    </source>
</reference>
<sequence length="416" mass="45409">MLKRDMNIADYDPELYAAIQEETLRQEEHIELIASENYTSPRVMQAQGSQLTNKYAEGYPGKRYYGGCEYVDKAEALAIDRACQLFGCEYANVQPHSGSQANSAVYMALLNPGDTVLGMSLAHGGHLTHGSPVNFSGKHYNVIPYGIDEAGQINYDEMEALALEHKPKMIIGGFSAYSQIVDWKRMREIADKVGAYLFVDMAHVAGLIAAGVYPSPVPFAHVVTTTTHKTLAGPRGGLILSNAGEEMYKKLNSAVFPGGQGGPLMHVIAAKAVAFKEAMEPEFKEYQARVVKNAKAMVAQFQERGYKIVSNSTENHLFLVDLIDKNITGKEADAALGAANITVNKNSVPNDPRSPFVTSGIRVGTPAITRRGFTEQDAKDLANWMCDVLDNINDQGVIEATKQKVLAICQRLPVYA</sequence>
<name>GLYA1_VIBCH</name>
<protein>
    <recommendedName>
        <fullName evidence="1">Serine hydroxymethyltransferase 1</fullName>
        <shortName evidence="1">SHMT 1</shortName>
        <shortName evidence="1">Serine methylase 1</shortName>
        <ecNumber evidence="1">2.1.2.1</ecNumber>
    </recommendedName>
</protein>
<gene>
    <name evidence="1" type="primary">glyA1</name>
    <name type="ordered locus">VC_0941</name>
</gene>
<organism>
    <name type="scientific">Vibrio cholerae serotype O1 (strain ATCC 39315 / El Tor Inaba N16961)</name>
    <dbReference type="NCBI Taxonomy" id="243277"/>
    <lineage>
        <taxon>Bacteria</taxon>
        <taxon>Pseudomonadati</taxon>
        <taxon>Pseudomonadota</taxon>
        <taxon>Gammaproteobacteria</taxon>
        <taxon>Vibrionales</taxon>
        <taxon>Vibrionaceae</taxon>
        <taxon>Vibrio</taxon>
    </lineage>
</organism>
<accession>Q9KTG1</accession>
<keyword id="KW-0028">Amino-acid biosynthesis</keyword>
<keyword id="KW-0963">Cytoplasm</keyword>
<keyword id="KW-0554">One-carbon metabolism</keyword>
<keyword id="KW-0663">Pyridoxal phosphate</keyword>
<keyword id="KW-1185">Reference proteome</keyword>
<keyword id="KW-0808">Transferase</keyword>
<comment type="function">
    <text evidence="1">Catalyzes the reversible interconversion of serine and glycine with tetrahydrofolate (THF) serving as the one-carbon carrier. This reaction serves as the major source of one-carbon groups required for the biosynthesis of purines, thymidylate, methionine, and other important biomolecules. Also exhibits THF-independent aldolase activity toward beta-hydroxyamino acids, producing glycine and aldehydes, via a retro-aldol mechanism.</text>
</comment>
<comment type="catalytic activity">
    <reaction evidence="1">
        <text>(6R)-5,10-methylene-5,6,7,8-tetrahydrofolate + glycine + H2O = (6S)-5,6,7,8-tetrahydrofolate + L-serine</text>
        <dbReference type="Rhea" id="RHEA:15481"/>
        <dbReference type="ChEBI" id="CHEBI:15377"/>
        <dbReference type="ChEBI" id="CHEBI:15636"/>
        <dbReference type="ChEBI" id="CHEBI:33384"/>
        <dbReference type="ChEBI" id="CHEBI:57305"/>
        <dbReference type="ChEBI" id="CHEBI:57453"/>
        <dbReference type="EC" id="2.1.2.1"/>
    </reaction>
</comment>
<comment type="cofactor">
    <cofactor evidence="1">
        <name>pyridoxal 5'-phosphate</name>
        <dbReference type="ChEBI" id="CHEBI:597326"/>
    </cofactor>
</comment>
<comment type="pathway">
    <text evidence="1">One-carbon metabolism; tetrahydrofolate interconversion.</text>
</comment>
<comment type="pathway">
    <text evidence="1">Amino-acid biosynthesis; glycine biosynthesis; glycine from L-serine: step 1/1.</text>
</comment>
<comment type="subunit">
    <text evidence="1">Homodimer.</text>
</comment>
<comment type="subcellular location">
    <subcellularLocation>
        <location evidence="1">Cytoplasm</location>
    </subcellularLocation>
</comment>
<comment type="similarity">
    <text evidence="1">Belongs to the SHMT family.</text>
</comment>
<comment type="sequence caution" evidence="2">
    <conflict type="erroneous initiation">
        <sequence resource="EMBL-CDS" id="AAF94103"/>
    </conflict>
</comment>
<evidence type="ECO:0000255" key="1">
    <source>
        <dbReference type="HAMAP-Rule" id="MF_00051"/>
    </source>
</evidence>
<evidence type="ECO:0000305" key="2"/>
<proteinExistence type="inferred from homology"/>
<dbReference type="EC" id="2.1.2.1" evidence="1"/>
<dbReference type="EMBL" id="AE003852">
    <property type="protein sequence ID" value="AAF94103.1"/>
    <property type="status" value="ALT_INIT"/>
    <property type="molecule type" value="Genomic_DNA"/>
</dbReference>
<dbReference type="PIR" id="H82258">
    <property type="entry name" value="H82258"/>
</dbReference>
<dbReference type="RefSeq" id="NP_230588.2">
    <property type="nucleotide sequence ID" value="NC_002505.1"/>
</dbReference>
<dbReference type="SMR" id="Q9KTG1"/>
<dbReference type="STRING" id="243277.VC_0941"/>
<dbReference type="DNASU" id="2614161"/>
<dbReference type="EnsemblBacteria" id="AAF94103">
    <property type="protein sequence ID" value="AAF94103"/>
    <property type="gene ID" value="VC_0941"/>
</dbReference>
<dbReference type="KEGG" id="vch:VC_0941"/>
<dbReference type="PATRIC" id="fig|243277.26.peg.897"/>
<dbReference type="eggNOG" id="COG0112">
    <property type="taxonomic scope" value="Bacteria"/>
</dbReference>
<dbReference type="HOGENOM" id="CLU_022477_2_1_6"/>
<dbReference type="UniPathway" id="UPA00193"/>
<dbReference type="UniPathway" id="UPA00288">
    <property type="reaction ID" value="UER01023"/>
</dbReference>
<dbReference type="Proteomes" id="UP000000584">
    <property type="component" value="Chromosome 1"/>
</dbReference>
<dbReference type="GO" id="GO:0005737">
    <property type="term" value="C:cytoplasm"/>
    <property type="evidence" value="ECO:0000318"/>
    <property type="project" value="GO_Central"/>
</dbReference>
<dbReference type="GO" id="GO:0005829">
    <property type="term" value="C:cytosol"/>
    <property type="evidence" value="ECO:0000318"/>
    <property type="project" value="GO_Central"/>
</dbReference>
<dbReference type="GO" id="GO:0004372">
    <property type="term" value="F:glycine hydroxymethyltransferase activity"/>
    <property type="evidence" value="ECO:0000318"/>
    <property type="project" value="GO_Central"/>
</dbReference>
<dbReference type="GO" id="GO:0030170">
    <property type="term" value="F:pyridoxal phosphate binding"/>
    <property type="evidence" value="ECO:0000318"/>
    <property type="project" value="GO_Central"/>
</dbReference>
<dbReference type="GO" id="GO:0019264">
    <property type="term" value="P:glycine biosynthetic process from serine"/>
    <property type="evidence" value="ECO:0000318"/>
    <property type="project" value="GO_Central"/>
</dbReference>
<dbReference type="GO" id="GO:0035999">
    <property type="term" value="P:tetrahydrofolate interconversion"/>
    <property type="evidence" value="ECO:0007669"/>
    <property type="project" value="UniProtKB-UniRule"/>
</dbReference>
<dbReference type="GO" id="GO:0046653">
    <property type="term" value="P:tetrahydrofolate metabolic process"/>
    <property type="evidence" value="ECO:0000318"/>
    <property type="project" value="GO_Central"/>
</dbReference>
<dbReference type="CDD" id="cd00378">
    <property type="entry name" value="SHMT"/>
    <property type="match status" value="1"/>
</dbReference>
<dbReference type="FunFam" id="3.40.640.10:FF:000001">
    <property type="entry name" value="Serine hydroxymethyltransferase"/>
    <property type="match status" value="1"/>
</dbReference>
<dbReference type="FunFam" id="3.90.1150.10:FF:000003">
    <property type="entry name" value="Serine hydroxymethyltransferase"/>
    <property type="match status" value="1"/>
</dbReference>
<dbReference type="Gene3D" id="3.90.1150.10">
    <property type="entry name" value="Aspartate Aminotransferase, domain 1"/>
    <property type="match status" value="1"/>
</dbReference>
<dbReference type="Gene3D" id="3.40.640.10">
    <property type="entry name" value="Type I PLP-dependent aspartate aminotransferase-like (Major domain)"/>
    <property type="match status" value="1"/>
</dbReference>
<dbReference type="HAMAP" id="MF_00051">
    <property type="entry name" value="SHMT"/>
    <property type="match status" value="1"/>
</dbReference>
<dbReference type="InterPro" id="IPR015424">
    <property type="entry name" value="PyrdxlP-dep_Trfase"/>
</dbReference>
<dbReference type="InterPro" id="IPR015421">
    <property type="entry name" value="PyrdxlP-dep_Trfase_major"/>
</dbReference>
<dbReference type="InterPro" id="IPR015422">
    <property type="entry name" value="PyrdxlP-dep_Trfase_small"/>
</dbReference>
<dbReference type="InterPro" id="IPR001085">
    <property type="entry name" value="Ser_HO-MeTrfase"/>
</dbReference>
<dbReference type="InterPro" id="IPR049943">
    <property type="entry name" value="Ser_HO-MeTrfase-like"/>
</dbReference>
<dbReference type="InterPro" id="IPR019798">
    <property type="entry name" value="Ser_HO-MeTrfase_PLP_BS"/>
</dbReference>
<dbReference type="InterPro" id="IPR039429">
    <property type="entry name" value="SHMT-like_dom"/>
</dbReference>
<dbReference type="NCBIfam" id="NF000586">
    <property type="entry name" value="PRK00011.1"/>
    <property type="match status" value="1"/>
</dbReference>
<dbReference type="PANTHER" id="PTHR11680">
    <property type="entry name" value="SERINE HYDROXYMETHYLTRANSFERASE"/>
    <property type="match status" value="1"/>
</dbReference>
<dbReference type="PANTHER" id="PTHR11680:SF50">
    <property type="entry name" value="SERINE HYDROXYMETHYLTRANSFERASE"/>
    <property type="match status" value="1"/>
</dbReference>
<dbReference type="Pfam" id="PF00464">
    <property type="entry name" value="SHMT"/>
    <property type="match status" value="1"/>
</dbReference>
<dbReference type="PIRSF" id="PIRSF000412">
    <property type="entry name" value="SHMT"/>
    <property type="match status" value="1"/>
</dbReference>
<dbReference type="SUPFAM" id="SSF53383">
    <property type="entry name" value="PLP-dependent transferases"/>
    <property type="match status" value="1"/>
</dbReference>
<dbReference type="PROSITE" id="PS00096">
    <property type="entry name" value="SHMT"/>
    <property type="match status" value="1"/>
</dbReference>
<feature type="chain" id="PRO_0000113690" description="Serine hydroxymethyltransferase 1">
    <location>
        <begin position="1"/>
        <end position="416"/>
    </location>
</feature>
<feature type="binding site" evidence="1">
    <location>
        <position position="121"/>
    </location>
    <ligand>
        <name>(6S)-5,6,7,8-tetrahydrofolate</name>
        <dbReference type="ChEBI" id="CHEBI:57453"/>
    </ligand>
</feature>
<feature type="binding site" evidence="1">
    <location>
        <begin position="125"/>
        <end position="127"/>
    </location>
    <ligand>
        <name>(6S)-5,6,7,8-tetrahydrofolate</name>
        <dbReference type="ChEBI" id="CHEBI:57453"/>
    </ligand>
</feature>
<feature type="binding site" evidence="1">
    <location>
        <position position="245"/>
    </location>
    <ligand>
        <name>(6S)-5,6,7,8-tetrahydrofolate</name>
        <dbReference type="ChEBI" id="CHEBI:57453"/>
    </ligand>
</feature>
<feature type="binding site" evidence="1">
    <location>
        <begin position="354"/>
        <end position="356"/>
    </location>
    <ligand>
        <name>(6S)-5,6,7,8-tetrahydrofolate</name>
        <dbReference type="ChEBI" id="CHEBI:57453"/>
    </ligand>
</feature>
<feature type="site" description="Plays an important role in substrate specificity" evidence="1">
    <location>
        <position position="228"/>
    </location>
</feature>
<feature type="modified residue" description="N6-(pyridoxal phosphate)lysine" evidence="1">
    <location>
        <position position="229"/>
    </location>
</feature>